<accession>A9AA47</accession>
<proteinExistence type="inferred from homology"/>
<name>GATE_METM6</name>
<protein>
    <recommendedName>
        <fullName evidence="1">Glutamyl-tRNA(Gln) amidotransferase subunit E</fullName>
        <shortName evidence="1">Glu-ADT subunit E</shortName>
        <ecNumber evidence="1">6.3.5.-</ecNumber>
    </recommendedName>
</protein>
<comment type="function">
    <text evidence="1">Allows the formation of correctly charged Gln-tRNA(Gln) through the transamidation of misacylated Glu-tRNA(Gln) in organisms which lack glutaminyl-tRNA synthetase. The reaction takes place in the presence of glutamine and ATP through an activated gamma-phospho-Glu-tRNA(Gln). The GatDE system is specific for glutamate and does not act on aspartate.</text>
</comment>
<comment type="catalytic activity">
    <reaction evidence="1">
        <text>L-glutamyl-tRNA(Gln) + L-glutamine + ATP + H2O = L-glutaminyl-tRNA(Gln) + L-glutamate + ADP + phosphate + H(+)</text>
        <dbReference type="Rhea" id="RHEA:17521"/>
        <dbReference type="Rhea" id="RHEA-COMP:9681"/>
        <dbReference type="Rhea" id="RHEA-COMP:9684"/>
        <dbReference type="ChEBI" id="CHEBI:15377"/>
        <dbReference type="ChEBI" id="CHEBI:15378"/>
        <dbReference type="ChEBI" id="CHEBI:29985"/>
        <dbReference type="ChEBI" id="CHEBI:30616"/>
        <dbReference type="ChEBI" id="CHEBI:43474"/>
        <dbReference type="ChEBI" id="CHEBI:58359"/>
        <dbReference type="ChEBI" id="CHEBI:78520"/>
        <dbReference type="ChEBI" id="CHEBI:78521"/>
        <dbReference type="ChEBI" id="CHEBI:456216"/>
    </reaction>
</comment>
<comment type="subunit">
    <text evidence="1">Heterodimer of GatD and GatE.</text>
</comment>
<comment type="similarity">
    <text evidence="1">Belongs to the GatB/GatE family. GatE subfamily.</text>
</comment>
<evidence type="ECO:0000255" key="1">
    <source>
        <dbReference type="HAMAP-Rule" id="MF_00588"/>
    </source>
</evidence>
<reference key="1">
    <citation type="submission" date="2007-10" db="EMBL/GenBank/DDBJ databases">
        <title>Complete sequence of Methanococcus maripaludis C6.</title>
        <authorList>
            <consortium name="US DOE Joint Genome Institute"/>
            <person name="Copeland A."/>
            <person name="Lucas S."/>
            <person name="Lapidus A."/>
            <person name="Barry K."/>
            <person name="Glavina del Rio T."/>
            <person name="Dalin E."/>
            <person name="Tice H."/>
            <person name="Pitluck S."/>
            <person name="Clum A."/>
            <person name="Schmutz J."/>
            <person name="Larimer F."/>
            <person name="Land M."/>
            <person name="Hauser L."/>
            <person name="Kyrpides N."/>
            <person name="Mikhailova N."/>
            <person name="Sieprawska-Lupa M."/>
            <person name="Whitman W.B."/>
            <person name="Richardson P."/>
        </authorList>
    </citation>
    <scope>NUCLEOTIDE SEQUENCE [LARGE SCALE GENOMIC DNA]</scope>
    <source>
        <strain>C6 / ATCC BAA-1332</strain>
    </source>
</reference>
<sequence>MDYDYEKLGLKVGLEIHQQLNTKRKLFCNCPTKIRDDEPHGEIERVLRPSQSEMGHVDKAALLESKKEKKFIYQYYNDTTCLVELDDEPPHDVAPDAVDTALEVSTLMNMKMADEVQIMRKMVIDGSNTSGFQRTMFVSQEGFIETEYGNIGVTSLCLEEDACKKIEDGKDYTKYCVDRLGIPLLEITTEPDITSPKMGKEAARRIGTILRATGKVKRGLGTIRQDVNISIRNGARIEVKGVQNLDLIEKIIENEVTRQISLNEIKEELLKRNAEVVDEIKDITELLKDTESKVLKSALKNKGVIRAILLKGFSGMIGREVQPGRRLGTEFSDRGKVLGGVGGLFHTDELPKYGITEEEVTKLKEYMNCGENDAVILVADKKNKVERALNAVIERAKESMIGIPEETRKALDDGNTSYLRPLPGAARMYPETDVPTITITEEKLEAIRNNLPEMPEEKLVRFVKEYELNEDLAKQMVMSYHVDLFESLSKKYSKIKPTLIATTLEATLKEIKREGLDTDLLTEEHLEEVFKGLSEDKMSKEAVPEVIKGFIENPTKKLDEILEIKGMTSMSVEEVESIIEDIINQNIATVNEKGMGAMGLLMGRCMAQLRGKADGKIINTTLQKKLKEKVQ</sequence>
<keyword id="KW-0067">ATP-binding</keyword>
<keyword id="KW-0436">Ligase</keyword>
<keyword id="KW-0547">Nucleotide-binding</keyword>
<keyword id="KW-0648">Protein biosynthesis</keyword>
<feature type="chain" id="PRO_1000129789" description="Glutamyl-tRNA(Gln) amidotransferase subunit E">
    <location>
        <begin position="1"/>
        <end position="631"/>
    </location>
</feature>
<gene>
    <name evidence="1" type="primary">gatE</name>
    <name type="ordered locus">MmarC6_1407</name>
</gene>
<organism>
    <name type="scientific">Methanococcus maripaludis (strain C6 / ATCC BAA-1332)</name>
    <dbReference type="NCBI Taxonomy" id="444158"/>
    <lineage>
        <taxon>Archaea</taxon>
        <taxon>Methanobacteriati</taxon>
        <taxon>Methanobacteriota</taxon>
        <taxon>Methanomada group</taxon>
        <taxon>Methanococci</taxon>
        <taxon>Methanococcales</taxon>
        <taxon>Methanococcaceae</taxon>
        <taxon>Methanococcus</taxon>
    </lineage>
</organism>
<dbReference type="EC" id="6.3.5.-" evidence="1"/>
<dbReference type="EMBL" id="CP000867">
    <property type="protein sequence ID" value="ABX02220.1"/>
    <property type="molecule type" value="Genomic_DNA"/>
</dbReference>
<dbReference type="SMR" id="A9AA47"/>
<dbReference type="STRING" id="444158.MmarC6_1407"/>
<dbReference type="KEGG" id="mmx:MmarC6_1407"/>
<dbReference type="eggNOG" id="arCOG01719">
    <property type="taxonomic scope" value="Archaea"/>
</dbReference>
<dbReference type="HOGENOM" id="CLU_030702_0_0_2"/>
<dbReference type="OrthoDB" id="7316at2157"/>
<dbReference type="PhylomeDB" id="A9AA47"/>
<dbReference type="GO" id="GO:0005737">
    <property type="term" value="C:cytoplasm"/>
    <property type="evidence" value="ECO:0007669"/>
    <property type="project" value="InterPro"/>
</dbReference>
<dbReference type="GO" id="GO:0004812">
    <property type="term" value="F:aminoacyl-tRNA ligase activity"/>
    <property type="evidence" value="ECO:0007669"/>
    <property type="project" value="InterPro"/>
</dbReference>
<dbReference type="GO" id="GO:0005524">
    <property type="term" value="F:ATP binding"/>
    <property type="evidence" value="ECO:0007669"/>
    <property type="project" value="UniProtKB-KW"/>
</dbReference>
<dbReference type="GO" id="GO:0050567">
    <property type="term" value="F:glutaminyl-tRNA synthase (glutamine-hydrolyzing) activity"/>
    <property type="evidence" value="ECO:0007669"/>
    <property type="project" value="UniProtKB-UniRule"/>
</dbReference>
<dbReference type="GO" id="GO:0070681">
    <property type="term" value="P:glutaminyl-tRNAGln biosynthesis via transamidation"/>
    <property type="evidence" value="ECO:0007669"/>
    <property type="project" value="TreeGrafter"/>
</dbReference>
<dbReference type="GO" id="GO:0006412">
    <property type="term" value="P:translation"/>
    <property type="evidence" value="ECO:0007669"/>
    <property type="project" value="UniProtKB-UniRule"/>
</dbReference>
<dbReference type="FunFam" id="1.10.10.410:FF:000003">
    <property type="entry name" value="Glutamyl-tRNA(Gln) amidotransferase subunit E"/>
    <property type="match status" value="1"/>
</dbReference>
<dbReference type="FunFam" id="3.30.1360.30:FF:000003">
    <property type="entry name" value="Glutamyl-tRNA(Gln) amidotransferase subunit E"/>
    <property type="match status" value="1"/>
</dbReference>
<dbReference type="Gene3D" id="1.10.10.410">
    <property type="match status" value="1"/>
</dbReference>
<dbReference type="Gene3D" id="3.30.1360.30">
    <property type="entry name" value="GAD-like domain"/>
    <property type="match status" value="1"/>
</dbReference>
<dbReference type="Gene3D" id="1.10.150.380">
    <property type="entry name" value="GatB domain, N-terminal subdomain"/>
    <property type="match status" value="1"/>
</dbReference>
<dbReference type="HAMAP" id="MF_00588">
    <property type="entry name" value="GatE"/>
    <property type="match status" value="1"/>
</dbReference>
<dbReference type="InterPro" id="IPR017959">
    <property type="entry name" value="Asn/Gln-tRNA_amidoTrfase_suB/E"/>
</dbReference>
<dbReference type="InterPro" id="IPR006075">
    <property type="entry name" value="Asn/Gln-tRNA_Trfase_suB/E_cat"/>
</dbReference>
<dbReference type="InterPro" id="IPR018027">
    <property type="entry name" value="Asn/Gln_amidotransferase"/>
</dbReference>
<dbReference type="InterPro" id="IPR003789">
    <property type="entry name" value="Asn/Gln_tRNA_amidoTrase-B-like"/>
</dbReference>
<dbReference type="InterPro" id="IPR004115">
    <property type="entry name" value="GAD-like_sf"/>
</dbReference>
<dbReference type="InterPro" id="IPR029351">
    <property type="entry name" value="GAD_dom"/>
</dbReference>
<dbReference type="InterPro" id="IPR042114">
    <property type="entry name" value="GatB_C_1"/>
</dbReference>
<dbReference type="InterPro" id="IPR023168">
    <property type="entry name" value="GatB_Yqey_C_2"/>
</dbReference>
<dbReference type="InterPro" id="IPR004414">
    <property type="entry name" value="GatE"/>
</dbReference>
<dbReference type="InterPro" id="IPR017958">
    <property type="entry name" value="Gln-tRNA_amidoTrfase_suB_CS"/>
</dbReference>
<dbReference type="InterPro" id="IPR014746">
    <property type="entry name" value="Gln_synth/guanido_kin_cat_dom"/>
</dbReference>
<dbReference type="NCBIfam" id="TIGR00134">
    <property type="entry name" value="gatE_arch"/>
    <property type="match status" value="1"/>
</dbReference>
<dbReference type="NCBIfam" id="NF003107">
    <property type="entry name" value="PRK04028.1"/>
    <property type="match status" value="1"/>
</dbReference>
<dbReference type="PANTHER" id="PTHR11659">
    <property type="entry name" value="GLUTAMYL-TRNA GLN AMIDOTRANSFERASE SUBUNIT B MITOCHONDRIAL AND PROKARYOTIC PET112-RELATED"/>
    <property type="match status" value="1"/>
</dbReference>
<dbReference type="PANTHER" id="PTHR11659:SF2">
    <property type="entry name" value="GLUTAMYL-TRNA(GLN) AMIDOTRANSFERASE SUBUNIT E"/>
    <property type="match status" value="1"/>
</dbReference>
<dbReference type="Pfam" id="PF02938">
    <property type="entry name" value="GAD"/>
    <property type="match status" value="1"/>
</dbReference>
<dbReference type="Pfam" id="PF02934">
    <property type="entry name" value="GatB_N"/>
    <property type="match status" value="1"/>
</dbReference>
<dbReference type="Pfam" id="PF02637">
    <property type="entry name" value="GatB_Yqey"/>
    <property type="match status" value="1"/>
</dbReference>
<dbReference type="SMART" id="SM00845">
    <property type="entry name" value="GatB_Yqey"/>
    <property type="match status" value="1"/>
</dbReference>
<dbReference type="SUPFAM" id="SSF55261">
    <property type="entry name" value="GAD domain-like"/>
    <property type="match status" value="1"/>
</dbReference>
<dbReference type="SUPFAM" id="SSF89095">
    <property type="entry name" value="GatB/YqeY motif"/>
    <property type="match status" value="1"/>
</dbReference>
<dbReference type="SUPFAM" id="SSF55931">
    <property type="entry name" value="Glutamine synthetase/guanido kinase"/>
    <property type="match status" value="1"/>
</dbReference>
<dbReference type="PROSITE" id="PS01234">
    <property type="entry name" value="GATB"/>
    <property type="match status" value="1"/>
</dbReference>